<keyword id="KW-1003">Cell membrane</keyword>
<keyword id="KW-1015">Disulfide bond</keyword>
<keyword id="KW-0297">G-protein coupled receptor</keyword>
<keyword id="KW-0325">Glycoprotein</keyword>
<keyword id="KW-0472">Membrane</keyword>
<keyword id="KW-0589">Pheromone response</keyword>
<keyword id="KW-0675">Receptor</keyword>
<keyword id="KW-1185">Reference proteome</keyword>
<keyword id="KW-0807">Transducer</keyword>
<keyword id="KW-0812">Transmembrane</keyword>
<keyword id="KW-1133">Transmembrane helix</keyword>
<gene>
    <name type="primary">Vmn1r53</name>
    <name type="synonym">V1rb3</name>
</gene>
<proteinExistence type="evidence at transcript level"/>
<feature type="chain" id="PRO_0000239975" description="Vomeronasal type-1 receptor 53">
    <location>
        <begin position="1"/>
        <end position="310"/>
    </location>
</feature>
<feature type="topological domain" description="Extracellular" evidence="1">
    <location>
        <begin position="1"/>
        <end position="20"/>
    </location>
</feature>
<feature type="transmembrane region" description="Helical; Name=1" evidence="1">
    <location>
        <begin position="21"/>
        <end position="41"/>
    </location>
</feature>
<feature type="topological domain" description="Cytoplasmic" evidence="1">
    <location>
        <begin position="42"/>
        <end position="50"/>
    </location>
</feature>
<feature type="transmembrane region" description="Helical; Name=2" evidence="1">
    <location>
        <begin position="51"/>
        <end position="71"/>
    </location>
</feature>
<feature type="topological domain" description="Extracellular" evidence="1">
    <location>
        <begin position="72"/>
        <end position="93"/>
    </location>
</feature>
<feature type="transmembrane region" description="Helical; Name=3" evidence="1">
    <location>
        <begin position="94"/>
        <end position="114"/>
    </location>
</feature>
<feature type="topological domain" description="Cytoplasmic" evidence="1">
    <location>
        <begin position="115"/>
        <end position="134"/>
    </location>
</feature>
<feature type="transmembrane region" description="Helical; Name=4" evidence="1">
    <location>
        <begin position="135"/>
        <end position="155"/>
    </location>
</feature>
<feature type="topological domain" description="Extracellular" evidence="1">
    <location>
        <begin position="156"/>
        <end position="183"/>
    </location>
</feature>
<feature type="transmembrane region" description="Helical; Name=5" evidence="1">
    <location>
        <begin position="184"/>
        <end position="204"/>
    </location>
</feature>
<feature type="topological domain" description="Cytoplasmic" evidence="1">
    <location>
        <begin position="205"/>
        <end position="238"/>
    </location>
</feature>
<feature type="transmembrane region" description="Helical; Name=6" evidence="1">
    <location>
        <begin position="239"/>
        <end position="259"/>
    </location>
</feature>
<feature type="topological domain" description="Extracellular" evidence="1">
    <location>
        <begin position="260"/>
        <end position="268"/>
    </location>
</feature>
<feature type="transmembrane region" description="Helical; Name=7" evidence="1">
    <location>
        <begin position="269"/>
        <end position="289"/>
    </location>
</feature>
<feature type="topological domain" description="Cytoplasmic" evidence="1">
    <location>
        <begin position="290"/>
        <end position="310"/>
    </location>
</feature>
<feature type="glycosylation site" description="N-linked (GlcNAc...) asparagine" evidence="1">
    <location>
        <position position="159"/>
    </location>
</feature>
<feature type="disulfide bond" evidence="2">
    <location>
        <begin position="85"/>
        <end position="172"/>
    </location>
</feature>
<protein>
    <recommendedName>
        <fullName>Vomeronasal type-1 receptor 53</fullName>
    </recommendedName>
    <alternativeName>
        <fullName>Pheromone receptor VN5</fullName>
    </alternativeName>
    <alternativeName>
        <fullName>Vomeronasal receptor 5</fullName>
    </alternativeName>
    <alternativeName>
        <fullName>Vomeronasal type-1 receptor B3</fullName>
    </alternativeName>
</protein>
<reference evidence="6" key="1">
    <citation type="journal article" date="2000" name="Genome Res.">
        <title>Sequence diversity and genomic organization of vomeronasal receptor genes in the mouse.</title>
        <authorList>
            <person name="Del Punta K."/>
            <person name="Rothman A."/>
            <person name="Rodriguez I."/>
            <person name="Mombaerts P."/>
        </authorList>
    </citation>
    <scope>NUCLEOTIDE SEQUENCE [GENOMIC DNA]</scope>
    <source>
        <strain evidence="6">129/SvJ</strain>
    </source>
</reference>
<reference evidence="7" key="2">
    <citation type="journal article" date="2002" name="Proc. Natl. Acad. Sci. U.S.A.">
        <title>Sequence analysis of mouse vomeronasal receptor gene clusters reveals common promoter motifs and a history of recent expansion.</title>
        <authorList>
            <person name="Lane R.P."/>
            <person name="Cutforth T."/>
            <person name="Axel R."/>
            <person name="Hood L."/>
            <person name="Trask B.J."/>
        </authorList>
    </citation>
    <scope>NUCLEOTIDE SEQUENCE [GENOMIC DNA]</scope>
</reference>
<reference key="3">
    <citation type="journal article" date="2004" name="Genome Res.">
        <title>The status, quality, and expansion of the NIH full-length cDNA project: the Mammalian Gene Collection (MGC).</title>
        <authorList>
            <consortium name="The MGC Project Team"/>
        </authorList>
    </citation>
    <scope>NUCLEOTIDE SEQUENCE [LARGE SCALE MRNA]</scope>
    <source>
        <tissue>Brain</tissue>
    </source>
</reference>
<reference evidence="4" key="4">
    <citation type="journal article" date="2002" name="Nature">
        <title>Deficient pheromone responses in mice lacking a cluster of vomeronasal receptor genes.</title>
        <authorList>
            <person name="Del Punta K."/>
            <person name="Leinders-Zufall T."/>
            <person name="Rodriguez I."/>
            <person name="Jukam D."/>
            <person name="Wysocki C.J."/>
            <person name="Ogawa S."/>
            <person name="Zufall F."/>
            <person name="Mombaerts P."/>
        </authorList>
    </citation>
    <scope>PUTATIVE FUNCTION</scope>
    <scope>DISRUPTION PHENOTYPE</scope>
</reference>
<evidence type="ECO:0000255" key="1"/>
<evidence type="ECO:0000255" key="2">
    <source>
        <dbReference type="PROSITE-ProRule" id="PRU00521"/>
    </source>
</evidence>
<evidence type="ECO:0000269" key="3">
    <source>
    </source>
</evidence>
<evidence type="ECO:0000305" key="4"/>
<evidence type="ECO:0000305" key="5">
    <source>
    </source>
</evidence>
<evidence type="ECO:0000312" key="6">
    <source>
        <dbReference type="EMBL" id="AAG42085.1"/>
    </source>
</evidence>
<evidence type="ECO:0000312" key="7">
    <source>
        <dbReference type="EMBL" id="AAG43251.1"/>
    </source>
</evidence>
<name>V1R53_MOUSE</name>
<accession>Q9EP93</accession>
<accession>Q059M1</accession>
<sequence>MNKANLLHTDINLKITLFSEVSVGISANSILIFAHLCMLLGENRPKPIDLYIAFFSLTQLMLLITMGLIAVDMFMPWGRWDSTTCQSLIYLHRLLRGLTLSATCLLNVLWTITLSPRSSCLTKFKHKSLQHISCAFLFLCVLYMSFNSHLFISIIAYPNLTLENFMYVTQSCSLIPLSYFRKSMFSIPMAIREALLIGLMALSGGYMVAHLWRHKKQAQHLHRTSLSSKASPEQRATRTIMLLMSFFVVLYILDLVIFHSRMKFKDGSILYGVQIIVSHSYATVSPFVFICTEKRITNFLRSMCGRIVNI</sequence>
<dbReference type="EMBL" id="AF291491">
    <property type="protein sequence ID" value="AAG42085.1"/>
    <property type="molecule type" value="Genomic_DNA"/>
</dbReference>
<dbReference type="EMBL" id="AF129005">
    <property type="protein sequence ID" value="AAG43251.1"/>
    <property type="molecule type" value="Genomic_DNA"/>
</dbReference>
<dbReference type="EMBL" id="BC125605">
    <property type="protein sequence ID" value="AAI25606.1"/>
    <property type="molecule type" value="mRNA"/>
</dbReference>
<dbReference type="CCDS" id="CCDS20355.1"/>
<dbReference type="SMR" id="Q9EP93"/>
<dbReference type="STRING" id="10090.ENSMUSP00000075455"/>
<dbReference type="GlyCosmos" id="Q9EP93">
    <property type="glycosylation" value="1 site, No reported glycans"/>
</dbReference>
<dbReference type="GlyGen" id="Q9EP93">
    <property type="glycosylation" value="1 site"/>
</dbReference>
<dbReference type="iPTMnet" id="Q9EP93"/>
<dbReference type="PhosphoSitePlus" id="Q9EP93"/>
<dbReference type="PaxDb" id="10090-ENSMUSP00000075455"/>
<dbReference type="AGR" id="MGI:2148516"/>
<dbReference type="MGI" id="MGI:2148516">
    <property type="gene designation" value="Vmn1r53"/>
</dbReference>
<dbReference type="eggNOG" id="ENOG502SNRJ">
    <property type="taxonomic scope" value="Eukaryota"/>
</dbReference>
<dbReference type="InParanoid" id="Q9EP93"/>
<dbReference type="OrthoDB" id="9620038at2759"/>
<dbReference type="PhylomeDB" id="Q9EP93"/>
<dbReference type="PRO" id="PR:Q9EP93"/>
<dbReference type="Proteomes" id="UP000000589">
    <property type="component" value="Unplaced"/>
</dbReference>
<dbReference type="RNAct" id="Q9EP93">
    <property type="molecule type" value="protein"/>
</dbReference>
<dbReference type="GO" id="GO:0005886">
    <property type="term" value="C:plasma membrane"/>
    <property type="evidence" value="ECO:0007669"/>
    <property type="project" value="UniProtKB-SubCell"/>
</dbReference>
<dbReference type="GO" id="GO:0016503">
    <property type="term" value="F:pheromone receptor activity"/>
    <property type="evidence" value="ECO:0007669"/>
    <property type="project" value="InterPro"/>
</dbReference>
<dbReference type="GO" id="GO:0019236">
    <property type="term" value="P:response to pheromone"/>
    <property type="evidence" value="ECO:0007669"/>
    <property type="project" value="UniProtKB-KW"/>
</dbReference>
<dbReference type="GO" id="GO:0007606">
    <property type="term" value="P:sensory perception of chemical stimulus"/>
    <property type="evidence" value="ECO:0000304"/>
    <property type="project" value="MGI"/>
</dbReference>
<dbReference type="CDD" id="cd13949">
    <property type="entry name" value="7tm_V1R_pheromone"/>
    <property type="match status" value="1"/>
</dbReference>
<dbReference type="FunFam" id="1.20.1070.10:FF:000051">
    <property type="entry name" value="Vomeronasal type-1 receptor"/>
    <property type="match status" value="1"/>
</dbReference>
<dbReference type="Gene3D" id="1.20.1070.10">
    <property type="entry name" value="Rhodopsin 7-helix transmembrane proteins"/>
    <property type="match status" value="1"/>
</dbReference>
<dbReference type="InterPro" id="IPR017452">
    <property type="entry name" value="GPCR_Rhodpsn_7TM"/>
</dbReference>
<dbReference type="InterPro" id="IPR004072">
    <property type="entry name" value="Vmron_rcpt_1"/>
</dbReference>
<dbReference type="PANTHER" id="PTHR24062">
    <property type="entry name" value="VOMERONASAL TYPE-1 RECEPTOR"/>
    <property type="match status" value="1"/>
</dbReference>
<dbReference type="Pfam" id="PF03402">
    <property type="entry name" value="V1R"/>
    <property type="match status" value="1"/>
</dbReference>
<dbReference type="PRINTS" id="PR01534">
    <property type="entry name" value="VOMERONASL1R"/>
</dbReference>
<dbReference type="SUPFAM" id="SSF81321">
    <property type="entry name" value="Family A G protein-coupled receptor-like"/>
    <property type="match status" value="1"/>
</dbReference>
<dbReference type="PROSITE" id="PS50262">
    <property type="entry name" value="G_PROTEIN_RECEP_F1_2"/>
    <property type="match status" value="1"/>
</dbReference>
<comment type="function">
    <text evidence="3">Putative pheromone receptor implicated in the regulation of social and reproductive behavior.</text>
</comment>
<comment type="subcellular location">
    <subcellularLocation>
        <location evidence="4">Cell membrane</location>
        <topology evidence="1">Multi-pass membrane protein</topology>
    </subcellularLocation>
</comment>
<comment type="disruption phenotype">
    <text evidence="3">Mice lacking all but one V1ra and V1rb gene (12% of the V1r repertoire) show a lack of chemosensory response to a subset of known pheromonal ligands and changes in maternal aggression as well as male reproductive behavior.</text>
</comment>
<comment type="similarity">
    <text evidence="2">Belongs to the G-protein coupled receptor 1 family.</text>
</comment>
<comment type="caution">
    <text evidence="5">Was found to lack a conserved putative promoter and, therefore, may not be transcribed.</text>
</comment>
<organism>
    <name type="scientific">Mus musculus</name>
    <name type="common">Mouse</name>
    <dbReference type="NCBI Taxonomy" id="10090"/>
    <lineage>
        <taxon>Eukaryota</taxon>
        <taxon>Metazoa</taxon>
        <taxon>Chordata</taxon>
        <taxon>Craniata</taxon>
        <taxon>Vertebrata</taxon>
        <taxon>Euteleostomi</taxon>
        <taxon>Mammalia</taxon>
        <taxon>Eutheria</taxon>
        <taxon>Euarchontoglires</taxon>
        <taxon>Glires</taxon>
        <taxon>Rodentia</taxon>
        <taxon>Myomorpha</taxon>
        <taxon>Muroidea</taxon>
        <taxon>Muridae</taxon>
        <taxon>Murinae</taxon>
        <taxon>Mus</taxon>
        <taxon>Mus</taxon>
    </lineage>
</organism>